<name>DPH1_NEUCR</name>
<organism>
    <name type="scientific">Neurospora crassa (strain ATCC 24698 / 74-OR23-1A / CBS 708.71 / DSM 1257 / FGSC 987)</name>
    <dbReference type="NCBI Taxonomy" id="367110"/>
    <lineage>
        <taxon>Eukaryota</taxon>
        <taxon>Fungi</taxon>
        <taxon>Dikarya</taxon>
        <taxon>Ascomycota</taxon>
        <taxon>Pezizomycotina</taxon>
        <taxon>Sordariomycetes</taxon>
        <taxon>Sordariomycetidae</taxon>
        <taxon>Sordariales</taxon>
        <taxon>Sordariaceae</taxon>
        <taxon>Neurospora</taxon>
    </lineage>
</organism>
<keyword id="KW-0963">Cytoplasm</keyword>
<keyword id="KW-0408">Iron</keyword>
<keyword id="KW-0411">Iron-sulfur</keyword>
<keyword id="KW-0479">Metal-binding</keyword>
<keyword id="KW-1185">Reference proteome</keyword>
<keyword id="KW-0949">S-adenosyl-L-methionine</keyword>
<keyword id="KW-0808">Transferase</keyword>
<sequence>MEDDRAQVDLGIAADIDEMNPPPPPSVQQKQPKKRFLGRQSAAAGKSSSSSSNSTSQPAGANTSIEDSGAIQVAQPRRAPRMLNQVPDSILHDAALNEAIALLPSNYSFEIHKTIHRIRTLDAKRVALQMPEGLLLFATTISDILTQFCPGIETLIMGDVTYGACCIDDYTARAMGCDLLVHYAHSCLIPVDVTKIKTLYVFVDISIDTSHLLATLERNFAPGKSIAMVGTIQFNATIHGVRSTLQKAGYEVIIPQIAPLSKGEILGCTSPNLSQFLTSSGKQVDMILYLGDGRFHLESIMIHNPSIPAYRYDPYSRKLTHETYGHEEMQDVRRSAIRQAKTAKKWGLILGSLGRQGNPNTLGLIEEKLKANGTPFVNFCLSEIFPGKLAMMSDVECWVQVACPRLSIDWGYAFPRPLLTPYEALIALEEKEDWGKGAYPMDYYGREGLGRTKPAAMEV</sequence>
<protein>
    <recommendedName>
        <fullName evidence="4">2-(3-amino-3-carboxypropyl)histidine synthase subunit 1</fullName>
        <ecNumber evidence="2">2.5.1.108</ecNumber>
    </recommendedName>
    <alternativeName>
        <fullName>Diphthamide biosynthesis protein 1</fullName>
    </alternativeName>
    <alternativeName>
        <fullName evidence="4">Diphtheria toxin resistance protein 1</fullName>
    </alternativeName>
    <alternativeName>
        <fullName evidence="4">S-adenosyl-L-methionine:L-histidine 3-amino-3-carboxypropyltransferase 1</fullName>
    </alternativeName>
</protein>
<evidence type="ECO:0000250" key="1">
    <source>
        <dbReference type="UniProtKB" id="O58832"/>
    </source>
</evidence>
<evidence type="ECO:0000250" key="2">
    <source>
        <dbReference type="UniProtKB" id="P40487"/>
    </source>
</evidence>
<evidence type="ECO:0000256" key="3">
    <source>
        <dbReference type="SAM" id="MobiDB-lite"/>
    </source>
</evidence>
<evidence type="ECO:0000305" key="4"/>
<comment type="function">
    <text evidence="2">Catalyzes the first step of diphthamide biosynthesis, a post-translational modification of histidine which occurs in elongation factor 2. Dph-1 and dph-2 transfer a 3-amino-3-carboxypropyl (ACP) group from S-adenosyl-L-methionine (SAM) to a histidine residue, the reaction is assisted by a reduction system comprising dph-3 and a NADH-dependent reductase, predominantly cbr-1.</text>
</comment>
<comment type="catalytic activity">
    <reaction evidence="2">
        <text>L-histidyl-[translation elongation factor 2] + S-adenosyl-L-methionine = 2-[(3S)-amino-3-carboxypropyl]-L-histidyl-[translation elongation factor 2] + S-methyl-5'-thioadenosine + H(+)</text>
        <dbReference type="Rhea" id="RHEA:36783"/>
        <dbReference type="Rhea" id="RHEA-COMP:9748"/>
        <dbReference type="Rhea" id="RHEA-COMP:9749"/>
        <dbReference type="ChEBI" id="CHEBI:15378"/>
        <dbReference type="ChEBI" id="CHEBI:17509"/>
        <dbReference type="ChEBI" id="CHEBI:29979"/>
        <dbReference type="ChEBI" id="CHEBI:59789"/>
        <dbReference type="ChEBI" id="CHEBI:73995"/>
        <dbReference type="EC" id="2.5.1.108"/>
    </reaction>
</comment>
<comment type="cofactor">
    <cofactor evidence="2">
        <name>[4Fe-4S] cluster</name>
        <dbReference type="ChEBI" id="CHEBI:49883"/>
    </cofactor>
    <text evidence="2">Binds 1 [4Fe-4S] cluster per subunit. The cluster is coordinated with 3 cysteines and an exchangeable S-adenosyl-L-methionine.</text>
</comment>
<comment type="pathway">
    <text>Protein modification; peptidyl-diphthamide biosynthesis.</text>
</comment>
<comment type="subunit">
    <text evidence="2">Component of the 2-(3-amino-3-carboxypropyl)histidine synthase complex composed of dph-1, dph-2, dph-3 and a NADH-dependent reductase, predominantly cbr-1.</text>
</comment>
<comment type="subcellular location">
    <subcellularLocation>
        <location evidence="2">Cytoplasm</location>
    </subcellularLocation>
</comment>
<comment type="similarity">
    <text evidence="4">Belongs to the DPH1/DPH2 family. DPH1 subfamily.</text>
</comment>
<gene>
    <name type="primary">dph-1</name>
    <name type="ORF">B18P7.020</name>
    <name type="ORF">NCU08503</name>
</gene>
<proteinExistence type="inferred from homology"/>
<reference key="1">
    <citation type="journal article" date="2003" name="Nucleic Acids Res.">
        <title>What's in the genome of a filamentous fungus? Analysis of the Neurospora genome sequence.</title>
        <authorList>
            <person name="Mannhaupt G."/>
            <person name="Montrone C."/>
            <person name="Haase D."/>
            <person name="Mewes H.-W."/>
            <person name="Aign V."/>
            <person name="Hoheisel J.D."/>
            <person name="Fartmann B."/>
            <person name="Nyakatura G."/>
            <person name="Kempken F."/>
            <person name="Maier J."/>
            <person name="Schulte U."/>
        </authorList>
    </citation>
    <scope>NUCLEOTIDE SEQUENCE [LARGE SCALE GENOMIC DNA]</scope>
    <source>
        <strain>ATCC 24698 / 74-OR23-1A / CBS 708.71 / DSM 1257 / FGSC 987</strain>
    </source>
</reference>
<reference key="2">
    <citation type="journal article" date="2003" name="Nature">
        <title>The genome sequence of the filamentous fungus Neurospora crassa.</title>
        <authorList>
            <person name="Galagan J.E."/>
            <person name="Calvo S.E."/>
            <person name="Borkovich K.A."/>
            <person name="Selker E.U."/>
            <person name="Read N.D."/>
            <person name="Jaffe D.B."/>
            <person name="FitzHugh W."/>
            <person name="Ma L.-J."/>
            <person name="Smirnov S."/>
            <person name="Purcell S."/>
            <person name="Rehman B."/>
            <person name="Elkins T."/>
            <person name="Engels R."/>
            <person name="Wang S."/>
            <person name="Nielsen C.B."/>
            <person name="Butler J."/>
            <person name="Endrizzi M."/>
            <person name="Qui D."/>
            <person name="Ianakiev P."/>
            <person name="Bell-Pedersen D."/>
            <person name="Nelson M.A."/>
            <person name="Werner-Washburne M."/>
            <person name="Selitrennikoff C.P."/>
            <person name="Kinsey J.A."/>
            <person name="Braun E.L."/>
            <person name="Zelter A."/>
            <person name="Schulte U."/>
            <person name="Kothe G.O."/>
            <person name="Jedd G."/>
            <person name="Mewes H.-W."/>
            <person name="Staben C."/>
            <person name="Marcotte E."/>
            <person name="Greenberg D."/>
            <person name="Roy A."/>
            <person name="Foley K."/>
            <person name="Naylor J."/>
            <person name="Stange-Thomann N."/>
            <person name="Barrett R."/>
            <person name="Gnerre S."/>
            <person name="Kamal M."/>
            <person name="Kamvysselis M."/>
            <person name="Mauceli E.W."/>
            <person name="Bielke C."/>
            <person name="Rudd S."/>
            <person name="Frishman D."/>
            <person name="Krystofova S."/>
            <person name="Rasmussen C."/>
            <person name="Metzenberg R.L."/>
            <person name="Perkins D.D."/>
            <person name="Kroken S."/>
            <person name="Cogoni C."/>
            <person name="Macino G."/>
            <person name="Catcheside D.E.A."/>
            <person name="Li W."/>
            <person name="Pratt R.J."/>
            <person name="Osmani S.A."/>
            <person name="DeSouza C.P.C."/>
            <person name="Glass N.L."/>
            <person name="Orbach M.J."/>
            <person name="Berglund J.A."/>
            <person name="Voelker R."/>
            <person name="Yarden O."/>
            <person name="Plamann M."/>
            <person name="Seiler S."/>
            <person name="Dunlap J.C."/>
            <person name="Radford A."/>
            <person name="Aramayo R."/>
            <person name="Natvig D.O."/>
            <person name="Alex L.A."/>
            <person name="Mannhaupt G."/>
            <person name="Ebbole D.J."/>
            <person name="Freitag M."/>
            <person name="Paulsen I."/>
            <person name="Sachs M.S."/>
            <person name="Lander E.S."/>
            <person name="Nusbaum C."/>
            <person name="Birren B.W."/>
        </authorList>
    </citation>
    <scope>NUCLEOTIDE SEQUENCE [LARGE SCALE GENOMIC DNA]</scope>
    <source>
        <strain>ATCC 24698 / 74-OR23-1A / CBS 708.71 / DSM 1257 / FGSC 987</strain>
    </source>
</reference>
<dbReference type="EC" id="2.5.1.108" evidence="2"/>
<dbReference type="EMBL" id="BX842594">
    <property type="protein sequence ID" value="CAE75675.1"/>
    <property type="molecule type" value="Genomic_DNA"/>
</dbReference>
<dbReference type="EMBL" id="CM002237">
    <property type="protein sequence ID" value="ESA43685.1"/>
    <property type="molecule type" value="Genomic_DNA"/>
</dbReference>
<dbReference type="EMBL" id="CM002237">
    <property type="protein sequence ID" value="ESA43686.1"/>
    <property type="molecule type" value="Genomic_DNA"/>
</dbReference>
<dbReference type="RefSeq" id="XP_011393622.1">
    <property type="nucleotide sequence ID" value="XM_011395320.1"/>
</dbReference>
<dbReference type="RefSeq" id="XP_011393623.1">
    <property type="nucleotide sequence ID" value="XM_011395321.1"/>
</dbReference>
<dbReference type="SMR" id="Q7SC98"/>
<dbReference type="FunCoup" id="Q7SC98">
    <property type="interactions" value="616"/>
</dbReference>
<dbReference type="STRING" id="367110.Q7SC98"/>
<dbReference type="PaxDb" id="5141-EFNCRP00000008474"/>
<dbReference type="EnsemblFungi" id="ESA43685">
    <property type="protein sequence ID" value="ESA43685"/>
    <property type="gene ID" value="NCU08503"/>
</dbReference>
<dbReference type="EnsemblFungi" id="ESA43686">
    <property type="protein sequence ID" value="ESA43686"/>
    <property type="gene ID" value="NCU08503"/>
</dbReference>
<dbReference type="GeneID" id="3879572"/>
<dbReference type="KEGG" id="ncr:NCU08503"/>
<dbReference type="VEuPathDB" id="FungiDB:NCU08503"/>
<dbReference type="HOGENOM" id="CLU_037146_1_1_1"/>
<dbReference type="InParanoid" id="Q7SC98"/>
<dbReference type="OMA" id="PGQVLGC"/>
<dbReference type="OrthoDB" id="1649088at2759"/>
<dbReference type="UniPathway" id="UPA00559"/>
<dbReference type="Proteomes" id="UP000001805">
    <property type="component" value="Chromosome 6, Linkage Group II"/>
</dbReference>
<dbReference type="GO" id="GO:0120513">
    <property type="term" value="C:2-(3-amino-3-carboxypropyl)histidine synthase complex"/>
    <property type="evidence" value="ECO:0000250"/>
    <property type="project" value="UniProtKB"/>
</dbReference>
<dbReference type="GO" id="GO:0005737">
    <property type="term" value="C:cytoplasm"/>
    <property type="evidence" value="ECO:0007669"/>
    <property type="project" value="UniProtKB-SubCell"/>
</dbReference>
<dbReference type="GO" id="GO:0090560">
    <property type="term" value="F:2-(3-amino-3-carboxypropyl)histidine synthase activity"/>
    <property type="evidence" value="ECO:0007669"/>
    <property type="project" value="UniProtKB-EC"/>
</dbReference>
<dbReference type="GO" id="GO:0051539">
    <property type="term" value="F:4 iron, 4 sulfur cluster binding"/>
    <property type="evidence" value="ECO:0000250"/>
    <property type="project" value="UniProtKB"/>
</dbReference>
<dbReference type="GO" id="GO:0046872">
    <property type="term" value="F:metal ion binding"/>
    <property type="evidence" value="ECO:0007669"/>
    <property type="project" value="UniProtKB-KW"/>
</dbReference>
<dbReference type="GO" id="GO:0017183">
    <property type="term" value="P:protein histidyl modification to diphthamide"/>
    <property type="evidence" value="ECO:0000250"/>
    <property type="project" value="UniProtKB"/>
</dbReference>
<dbReference type="FunFam" id="3.40.50.11840:FF:000001">
    <property type="entry name" value="2-(3-amino-3-carboxypropyl)histidine synthase subunit 1"/>
    <property type="match status" value="1"/>
</dbReference>
<dbReference type="FunFam" id="3.40.50.11850:FF:000001">
    <property type="entry name" value="2-(3-amino-3-carboxypropyl)histidine synthase subunit 1"/>
    <property type="match status" value="1"/>
</dbReference>
<dbReference type="FunFam" id="3.40.50.11860:FF:000002">
    <property type="entry name" value="2-(3-amino-3-carboxypropyl)histidine synthase subunit 1"/>
    <property type="match status" value="1"/>
</dbReference>
<dbReference type="Gene3D" id="3.40.50.11840">
    <property type="entry name" value="Diphthamide synthesis DPH1/DPH2 domain 1"/>
    <property type="match status" value="1"/>
</dbReference>
<dbReference type="Gene3D" id="3.40.50.11850">
    <property type="entry name" value="Diphthamide synthesis DPH1/DPH2 domain 2"/>
    <property type="match status" value="1"/>
</dbReference>
<dbReference type="Gene3D" id="3.40.50.11860">
    <property type="entry name" value="Diphthamide synthesis DPH1/DPH2 domain 3"/>
    <property type="match status" value="1"/>
</dbReference>
<dbReference type="InterPro" id="IPR016435">
    <property type="entry name" value="DPH1/DPH2"/>
</dbReference>
<dbReference type="InterPro" id="IPR042263">
    <property type="entry name" value="DPH1/DPH2_1"/>
</dbReference>
<dbReference type="InterPro" id="IPR042264">
    <property type="entry name" value="DPH1/DPH2_2"/>
</dbReference>
<dbReference type="InterPro" id="IPR042265">
    <property type="entry name" value="DPH1/DPH2_3"/>
</dbReference>
<dbReference type="NCBIfam" id="TIGR00322">
    <property type="entry name" value="diphth2_R"/>
    <property type="match status" value="1"/>
</dbReference>
<dbReference type="PANTHER" id="PTHR10762:SF1">
    <property type="entry name" value="2-(3-AMINO-3-CARBOXYPROPYL)HISTIDINE SYNTHASE SUBUNIT 1"/>
    <property type="match status" value="1"/>
</dbReference>
<dbReference type="PANTHER" id="PTHR10762">
    <property type="entry name" value="DIPHTHAMIDE BIOSYNTHESIS PROTEIN"/>
    <property type="match status" value="1"/>
</dbReference>
<dbReference type="Pfam" id="PF01866">
    <property type="entry name" value="Diphthamide_syn"/>
    <property type="match status" value="1"/>
</dbReference>
<dbReference type="SFLD" id="SFLDG01121">
    <property type="entry name" value="Diphthamide_biosynthesis"/>
    <property type="match status" value="1"/>
</dbReference>
<dbReference type="SFLD" id="SFLDS00032">
    <property type="entry name" value="Radical_SAM_3-amino-3-carboxyp"/>
    <property type="match status" value="1"/>
</dbReference>
<feature type="chain" id="PRO_0000083377" description="2-(3-amino-3-carboxypropyl)histidine synthase subunit 1">
    <location>
        <begin position="1"/>
        <end position="459"/>
    </location>
</feature>
<feature type="region of interest" description="Disordered" evidence="3">
    <location>
        <begin position="1"/>
        <end position="68"/>
    </location>
</feature>
<feature type="compositionally biased region" description="Low complexity" evidence="3">
    <location>
        <begin position="41"/>
        <end position="61"/>
    </location>
</feature>
<feature type="binding site" evidence="1">
    <location>
        <position position="165"/>
    </location>
    <ligand>
        <name>[4Fe-4S] cluster</name>
        <dbReference type="ChEBI" id="CHEBI:49883"/>
    </ligand>
</feature>
<feature type="binding site" evidence="1">
    <location>
        <position position="268"/>
    </location>
    <ligand>
        <name>[4Fe-4S] cluster</name>
        <dbReference type="ChEBI" id="CHEBI:49883"/>
    </ligand>
</feature>
<feature type="binding site" evidence="1">
    <location>
        <position position="403"/>
    </location>
    <ligand>
        <name>[4Fe-4S] cluster</name>
        <dbReference type="ChEBI" id="CHEBI:49883"/>
    </ligand>
</feature>
<accession>Q7SC98</accession>
<accession>V5IPM2</accession>